<gene>
    <name evidence="1" type="primary">aroL</name>
    <name type="ordered locus">YE3188</name>
</gene>
<proteinExistence type="inferred from homology"/>
<accession>A1JNV2</accession>
<sequence>MTQTIFMVGARGAGKTTIGKALAQALGYRFIDTDLFMQQTLQSSVAEIVAREGWDGFRLRESMALQTVTAPKTVVATGGGAVLSHDNRTFMRQHGMVIYLRASANVLAERLAEDPEDAQRPSLTGKPIVEEMLDVLASREPLYQEVAHHVLDATQPPEEVVEQILHILADEKVK</sequence>
<organism>
    <name type="scientific">Yersinia enterocolitica serotype O:8 / biotype 1B (strain NCTC 13174 / 8081)</name>
    <dbReference type="NCBI Taxonomy" id="393305"/>
    <lineage>
        <taxon>Bacteria</taxon>
        <taxon>Pseudomonadati</taxon>
        <taxon>Pseudomonadota</taxon>
        <taxon>Gammaproteobacteria</taxon>
        <taxon>Enterobacterales</taxon>
        <taxon>Yersiniaceae</taxon>
        <taxon>Yersinia</taxon>
    </lineage>
</organism>
<feature type="chain" id="PRO_1000067336" description="Shikimate kinase 2">
    <location>
        <begin position="1"/>
        <end position="174"/>
    </location>
</feature>
<feature type="region of interest" description="LID domain">
    <location>
        <begin position="112"/>
        <end position="126"/>
    </location>
</feature>
<feature type="binding site" evidence="1">
    <location>
        <begin position="12"/>
        <end position="17"/>
    </location>
    <ligand>
        <name>ATP</name>
        <dbReference type="ChEBI" id="CHEBI:30616"/>
    </ligand>
</feature>
<feature type="binding site" evidence="1">
    <location>
        <position position="16"/>
    </location>
    <ligand>
        <name>Mg(2+)</name>
        <dbReference type="ChEBI" id="CHEBI:18420"/>
    </ligand>
</feature>
<feature type="binding site" evidence="1">
    <location>
        <position position="32"/>
    </location>
    <ligand>
        <name>Mg(2+)</name>
        <dbReference type="ChEBI" id="CHEBI:18420"/>
    </ligand>
</feature>
<feature type="binding site" evidence="1">
    <location>
        <position position="34"/>
    </location>
    <ligand>
        <name>substrate</name>
    </ligand>
</feature>
<feature type="binding site" evidence="1">
    <location>
        <position position="58"/>
    </location>
    <ligand>
        <name>substrate</name>
    </ligand>
</feature>
<feature type="binding site" evidence="1">
    <location>
        <position position="79"/>
    </location>
    <ligand>
        <name>substrate</name>
    </ligand>
</feature>
<feature type="binding site" evidence="1">
    <location>
        <position position="120"/>
    </location>
    <ligand>
        <name>ATP</name>
        <dbReference type="ChEBI" id="CHEBI:30616"/>
    </ligand>
</feature>
<feature type="binding site" evidence="1">
    <location>
        <position position="139"/>
    </location>
    <ligand>
        <name>substrate</name>
    </ligand>
</feature>
<feature type="binding site" evidence="1">
    <location>
        <position position="155"/>
    </location>
    <ligand>
        <name>ATP</name>
        <dbReference type="ChEBI" id="CHEBI:30616"/>
    </ligand>
</feature>
<reference key="1">
    <citation type="journal article" date="2006" name="PLoS Genet.">
        <title>The complete genome sequence and comparative genome analysis of the high pathogenicity Yersinia enterocolitica strain 8081.</title>
        <authorList>
            <person name="Thomson N.R."/>
            <person name="Howard S."/>
            <person name="Wren B.W."/>
            <person name="Holden M.T.G."/>
            <person name="Crossman L."/>
            <person name="Challis G.L."/>
            <person name="Churcher C."/>
            <person name="Mungall K."/>
            <person name="Brooks K."/>
            <person name="Chillingworth T."/>
            <person name="Feltwell T."/>
            <person name="Abdellah Z."/>
            <person name="Hauser H."/>
            <person name="Jagels K."/>
            <person name="Maddison M."/>
            <person name="Moule S."/>
            <person name="Sanders M."/>
            <person name="Whitehead S."/>
            <person name="Quail M.A."/>
            <person name="Dougan G."/>
            <person name="Parkhill J."/>
            <person name="Prentice M.B."/>
        </authorList>
    </citation>
    <scope>NUCLEOTIDE SEQUENCE [LARGE SCALE GENOMIC DNA]</scope>
    <source>
        <strain>NCTC 13174 / 8081</strain>
    </source>
</reference>
<protein>
    <recommendedName>
        <fullName evidence="1">Shikimate kinase 2</fullName>
        <shortName evidence="1">SK 2</shortName>
        <ecNumber evidence="1">2.7.1.71</ecNumber>
    </recommendedName>
</protein>
<keyword id="KW-0028">Amino-acid biosynthesis</keyword>
<keyword id="KW-0057">Aromatic amino acid biosynthesis</keyword>
<keyword id="KW-0067">ATP-binding</keyword>
<keyword id="KW-0963">Cytoplasm</keyword>
<keyword id="KW-0418">Kinase</keyword>
<keyword id="KW-0460">Magnesium</keyword>
<keyword id="KW-0479">Metal-binding</keyword>
<keyword id="KW-0547">Nucleotide-binding</keyword>
<keyword id="KW-0808">Transferase</keyword>
<dbReference type="EC" id="2.7.1.71" evidence="1"/>
<dbReference type="EMBL" id="AM286415">
    <property type="protein sequence ID" value="CAL13220.1"/>
    <property type="molecule type" value="Genomic_DNA"/>
</dbReference>
<dbReference type="RefSeq" id="WP_011816919.1">
    <property type="nucleotide sequence ID" value="NC_008800.1"/>
</dbReference>
<dbReference type="RefSeq" id="YP_001007365.1">
    <property type="nucleotide sequence ID" value="NC_008800.1"/>
</dbReference>
<dbReference type="SMR" id="A1JNV2"/>
<dbReference type="KEGG" id="yen:YE3188"/>
<dbReference type="PATRIC" id="fig|393305.7.peg.3390"/>
<dbReference type="eggNOG" id="COG0703">
    <property type="taxonomic scope" value="Bacteria"/>
</dbReference>
<dbReference type="HOGENOM" id="CLU_057607_4_3_6"/>
<dbReference type="OrthoDB" id="9800332at2"/>
<dbReference type="UniPathway" id="UPA00053">
    <property type="reaction ID" value="UER00088"/>
</dbReference>
<dbReference type="Proteomes" id="UP000000642">
    <property type="component" value="Chromosome"/>
</dbReference>
<dbReference type="GO" id="GO:0005829">
    <property type="term" value="C:cytosol"/>
    <property type="evidence" value="ECO:0007669"/>
    <property type="project" value="TreeGrafter"/>
</dbReference>
<dbReference type="GO" id="GO:0005524">
    <property type="term" value="F:ATP binding"/>
    <property type="evidence" value="ECO:0007669"/>
    <property type="project" value="UniProtKB-UniRule"/>
</dbReference>
<dbReference type="GO" id="GO:0000287">
    <property type="term" value="F:magnesium ion binding"/>
    <property type="evidence" value="ECO:0007669"/>
    <property type="project" value="UniProtKB-UniRule"/>
</dbReference>
<dbReference type="GO" id="GO:0004765">
    <property type="term" value="F:shikimate kinase activity"/>
    <property type="evidence" value="ECO:0007669"/>
    <property type="project" value="UniProtKB-UniRule"/>
</dbReference>
<dbReference type="GO" id="GO:0008652">
    <property type="term" value="P:amino acid biosynthetic process"/>
    <property type="evidence" value="ECO:0007669"/>
    <property type="project" value="UniProtKB-KW"/>
</dbReference>
<dbReference type="GO" id="GO:0009073">
    <property type="term" value="P:aromatic amino acid family biosynthetic process"/>
    <property type="evidence" value="ECO:0007669"/>
    <property type="project" value="UniProtKB-KW"/>
</dbReference>
<dbReference type="GO" id="GO:0009423">
    <property type="term" value="P:chorismate biosynthetic process"/>
    <property type="evidence" value="ECO:0007669"/>
    <property type="project" value="UniProtKB-UniRule"/>
</dbReference>
<dbReference type="CDD" id="cd00464">
    <property type="entry name" value="SK"/>
    <property type="match status" value="1"/>
</dbReference>
<dbReference type="Gene3D" id="3.40.50.300">
    <property type="entry name" value="P-loop containing nucleotide triphosphate hydrolases"/>
    <property type="match status" value="1"/>
</dbReference>
<dbReference type="HAMAP" id="MF_00109">
    <property type="entry name" value="Shikimate_kinase"/>
    <property type="match status" value="1"/>
</dbReference>
<dbReference type="HAMAP" id="MF_01269">
    <property type="entry name" value="Shikimate_kinase_2"/>
    <property type="match status" value="1"/>
</dbReference>
<dbReference type="InterPro" id="IPR027417">
    <property type="entry name" value="P-loop_NTPase"/>
</dbReference>
<dbReference type="InterPro" id="IPR031322">
    <property type="entry name" value="Shikimate/glucono_kinase"/>
</dbReference>
<dbReference type="InterPro" id="IPR000623">
    <property type="entry name" value="Shikimate_kinase/TSH1"/>
</dbReference>
<dbReference type="InterPro" id="IPR027544">
    <property type="entry name" value="Shikimate_kinase_2"/>
</dbReference>
<dbReference type="InterPro" id="IPR023000">
    <property type="entry name" value="Shikimate_kinase_CS"/>
</dbReference>
<dbReference type="NCBIfam" id="NF002988">
    <property type="entry name" value="PRK03731.1"/>
    <property type="match status" value="1"/>
</dbReference>
<dbReference type="PANTHER" id="PTHR21087">
    <property type="entry name" value="SHIKIMATE KINASE"/>
    <property type="match status" value="1"/>
</dbReference>
<dbReference type="PANTHER" id="PTHR21087:SF21">
    <property type="entry name" value="SHIKIMATE KINASE 2"/>
    <property type="match status" value="1"/>
</dbReference>
<dbReference type="Pfam" id="PF01202">
    <property type="entry name" value="SKI"/>
    <property type="match status" value="1"/>
</dbReference>
<dbReference type="PRINTS" id="PR01100">
    <property type="entry name" value="SHIKIMTKNASE"/>
</dbReference>
<dbReference type="SUPFAM" id="SSF52540">
    <property type="entry name" value="P-loop containing nucleoside triphosphate hydrolases"/>
    <property type="match status" value="1"/>
</dbReference>
<dbReference type="PROSITE" id="PS01128">
    <property type="entry name" value="SHIKIMATE_KINASE"/>
    <property type="match status" value="1"/>
</dbReference>
<comment type="function">
    <text evidence="1">Catalyzes the specific phosphorylation of the 3-hydroxyl group of shikimic acid using ATP as a cosubstrate.</text>
</comment>
<comment type="catalytic activity">
    <reaction evidence="1">
        <text>shikimate + ATP = 3-phosphoshikimate + ADP + H(+)</text>
        <dbReference type="Rhea" id="RHEA:13121"/>
        <dbReference type="ChEBI" id="CHEBI:15378"/>
        <dbReference type="ChEBI" id="CHEBI:30616"/>
        <dbReference type="ChEBI" id="CHEBI:36208"/>
        <dbReference type="ChEBI" id="CHEBI:145989"/>
        <dbReference type="ChEBI" id="CHEBI:456216"/>
        <dbReference type="EC" id="2.7.1.71"/>
    </reaction>
</comment>
<comment type="cofactor">
    <cofactor evidence="1">
        <name>Mg(2+)</name>
        <dbReference type="ChEBI" id="CHEBI:18420"/>
    </cofactor>
    <text evidence="1">Binds 1 Mg(2+) ion per subunit.</text>
</comment>
<comment type="pathway">
    <text evidence="1">Metabolic intermediate biosynthesis; chorismate biosynthesis; chorismate from D-erythrose 4-phosphate and phosphoenolpyruvate: step 5/7.</text>
</comment>
<comment type="subunit">
    <text evidence="1">Monomer.</text>
</comment>
<comment type="subcellular location">
    <subcellularLocation>
        <location evidence="1">Cytoplasm</location>
    </subcellularLocation>
</comment>
<comment type="domain">
    <text evidence="1">The LID domain closes over the active site upon ATP binding.</text>
</comment>
<comment type="similarity">
    <text evidence="1">Belongs to the shikimate kinase family. AroL subfamily.</text>
</comment>
<evidence type="ECO:0000255" key="1">
    <source>
        <dbReference type="HAMAP-Rule" id="MF_01269"/>
    </source>
</evidence>
<name>AROL_YERE8</name>